<organism>
    <name type="scientific">Saccharolobus islandicus (strain L.S.2.15 / Lassen #1)</name>
    <name type="common">Sulfolobus islandicus</name>
    <dbReference type="NCBI Taxonomy" id="429572"/>
    <lineage>
        <taxon>Archaea</taxon>
        <taxon>Thermoproteota</taxon>
        <taxon>Thermoprotei</taxon>
        <taxon>Sulfolobales</taxon>
        <taxon>Sulfolobaceae</taxon>
        <taxon>Saccharolobus</taxon>
    </lineage>
</organism>
<name>RFCL_SACI2</name>
<keyword id="KW-0067">ATP-binding</keyword>
<keyword id="KW-0235">DNA replication</keyword>
<keyword id="KW-0547">Nucleotide-binding</keyword>
<feature type="chain" id="PRO_1000215341" description="Replication factor C large subunit">
    <location>
        <begin position="1"/>
        <end position="405"/>
    </location>
</feature>
<feature type="binding site" evidence="1">
    <location>
        <begin position="47"/>
        <end position="54"/>
    </location>
    <ligand>
        <name>ATP</name>
        <dbReference type="ChEBI" id="CHEBI:30616"/>
    </ligand>
</feature>
<evidence type="ECO:0000255" key="1">
    <source>
        <dbReference type="HAMAP-Rule" id="MF_01508"/>
    </source>
</evidence>
<proteinExistence type="inferred from homology"/>
<accession>C3MQ13</accession>
<reference key="1">
    <citation type="journal article" date="2009" name="Proc. Natl. Acad. Sci. U.S.A.">
        <title>Biogeography of the Sulfolobus islandicus pan-genome.</title>
        <authorList>
            <person name="Reno M.L."/>
            <person name="Held N.L."/>
            <person name="Fields C.J."/>
            <person name="Burke P.V."/>
            <person name="Whitaker R.J."/>
        </authorList>
    </citation>
    <scope>NUCLEOTIDE SEQUENCE [LARGE SCALE GENOMIC DNA]</scope>
    <source>
        <strain>L.S.2.15 / Lassen #1</strain>
    </source>
</reference>
<comment type="function">
    <text evidence="1">Part of the RFC clamp loader complex which loads the PCNA sliding clamp onto DNA.</text>
</comment>
<comment type="subunit">
    <text evidence="1">Heteromultimer composed of small subunits (RfcS) and large subunits (RfcL).</text>
</comment>
<comment type="similarity">
    <text evidence="1">Belongs to the activator 1 small subunits family. RfcL subfamily.</text>
</comment>
<dbReference type="EMBL" id="CP001399">
    <property type="protein sequence ID" value="ACP35476.1"/>
    <property type="molecule type" value="Genomic_DNA"/>
</dbReference>
<dbReference type="RefSeq" id="WP_012713707.1">
    <property type="nucleotide sequence ID" value="NC_012589.1"/>
</dbReference>
<dbReference type="SMR" id="C3MQ13"/>
<dbReference type="GeneID" id="7806753"/>
<dbReference type="KEGG" id="sis:LS215_1469"/>
<dbReference type="HOGENOM" id="CLU_027255_1_1_2"/>
<dbReference type="OrthoDB" id="8658at2157"/>
<dbReference type="Proteomes" id="UP000001747">
    <property type="component" value="Chromosome"/>
</dbReference>
<dbReference type="GO" id="GO:0005524">
    <property type="term" value="F:ATP binding"/>
    <property type="evidence" value="ECO:0007669"/>
    <property type="project" value="UniProtKB-UniRule"/>
</dbReference>
<dbReference type="GO" id="GO:0016887">
    <property type="term" value="F:ATP hydrolysis activity"/>
    <property type="evidence" value="ECO:0007669"/>
    <property type="project" value="InterPro"/>
</dbReference>
<dbReference type="GO" id="GO:0003689">
    <property type="term" value="F:DNA clamp loader activity"/>
    <property type="evidence" value="ECO:0007669"/>
    <property type="project" value="UniProtKB-UniRule"/>
</dbReference>
<dbReference type="GO" id="GO:0006260">
    <property type="term" value="P:DNA replication"/>
    <property type="evidence" value="ECO:0007669"/>
    <property type="project" value="UniProtKB-UniRule"/>
</dbReference>
<dbReference type="CDD" id="cd00009">
    <property type="entry name" value="AAA"/>
    <property type="match status" value="1"/>
</dbReference>
<dbReference type="CDD" id="cd18140">
    <property type="entry name" value="HLD_clamp_RFC"/>
    <property type="match status" value="1"/>
</dbReference>
<dbReference type="Gene3D" id="1.10.8.60">
    <property type="match status" value="1"/>
</dbReference>
<dbReference type="Gene3D" id="3.40.50.300">
    <property type="entry name" value="P-loop containing nucleotide triphosphate hydrolases"/>
    <property type="match status" value="1"/>
</dbReference>
<dbReference type="HAMAP" id="MF_01508">
    <property type="entry name" value="RfcL"/>
    <property type="match status" value="1"/>
</dbReference>
<dbReference type="InterPro" id="IPR003593">
    <property type="entry name" value="AAA+_ATPase"/>
</dbReference>
<dbReference type="InterPro" id="IPR003959">
    <property type="entry name" value="ATPase_AAA_core"/>
</dbReference>
<dbReference type="InterPro" id="IPR027417">
    <property type="entry name" value="P-loop_NTPase"/>
</dbReference>
<dbReference type="InterPro" id="IPR023935">
    <property type="entry name" value="Rep_factor-C_lsu"/>
</dbReference>
<dbReference type="InterPro" id="IPR047854">
    <property type="entry name" value="RFC_lid"/>
</dbReference>
<dbReference type="NCBIfam" id="NF003226">
    <property type="entry name" value="PRK04195.1-1"/>
    <property type="match status" value="1"/>
</dbReference>
<dbReference type="NCBIfam" id="NF003229">
    <property type="entry name" value="PRK04195.1-5"/>
    <property type="match status" value="1"/>
</dbReference>
<dbReference type="PANTHER" id="PTHR23389">
    <property type="entry name" value="CHROMOSOME TRANSMISSION FIDELITY FACTOR 18"/>
    <property type="match status" value="1"/>
</dbReference>
<dbReference type="PANTHER" id="PTHR23389:SF6">
    <property type="entry name" value="REPLICATION FACTOR C SUBUNIT 1"/>
    <property type="match status" value="1"/>
</dbReference>
<dbReference type="Pfam" id="PF00004">
    <property type="entry name" value="AAA"/>
    <property type="match status" value="1"/>
</dbReference>
<dbReference type="Pfam" id="PF21960">
    <property type="entry name" value="RCF1-5-like_lid"/>
    <property type="match status" value="1"/>
</dbReference>
<dbReference type="SMART" id="SM00382">
    <property type="entry name" value="AAA"/>
    <property type="match status" value="1"/>
</dbReference>
<dbReference type="SUPFAM" id="SSF52540">
    <property type="entry name" value="P-loop containing nucleoside triphosphate hydrolases"/>
    <property type="match status" value="1"/>
</dbReference>
<gene>
    <name evidence="1" type="primary">rfcL</name>
    <name type="ordered locus">LS215_1469</name>
</gene>
<protein>
    <recommendedName>
        <fullName evidence="1">Replication factor C large subunit</fullName>
        <shortName evidence="1">RFC large subunit</shortName>
    </recommendedName>
    <alternativeName>
        <fullName evidence="1">Clamp loader large subunit</fullName>
    </alternativeName>
</protein>
<sequence>MIQWFLKYRPRSLKDVENQDGAKKELQEWIESWLNGKPNAKAVLLHGPPGVGKTTLAEALAHDYNLELLEMNASDSRKLQDIKGVAEKASVYGSIFGTRGKLILLDEVDGINVREDTGAIQGILELIEKTKYPIIMTANDPWNPALRELRNKTKMVGLNKLGKYPLRRLLKKICQAEKIICDDEALNYIIDTSEGDARYAINMLQGIGEGYGKVTLDLVEAMARRKERELDPFETLRDIFWARYAWQAKNAATSAQIDYDMLIRWISENIPIQYDNIEDVWRAFDALSRASIFLKRAKGGDWDLLSYAYDLMSSGVAAAEIEKKKPNWKPKWKKYQFPSYIQLLSKSKDIRDTRDEIIKKLAIHSSFNKTLNDTYPFFLIFYKKYDKRLSLNTKEKEYLNSASKS</sequence>